<feature type="chain" id="PRO_0000203959" description="Tagatose 1,6-diphosphate aldolase">
    <location>
        <begin position="1"/>
        <end position="326"/>
    </location>
</feature>
<dbReference type="EC" id="4.1.2.40" evidence="1"/>
<dbReference type="EMBL" id="AE005672">
    <property type="protein sequence ID" value="AAK75299.1"/>
    <property type="molecule type" value="Genomic_DNA"/>
</dbReference>
<dbReference type="PIR" id="B95138">
    <property type="entry name" value="B95138"/>
</dbReference>
<dbReference type="RefSeq" id="WP_001229146.1">
    <property type="nucleotide sequence ID" value="NC_003028.3"/>
</dbReference>
<dbReference type="SMR" id="Q97QL3"/>
<dbReference type="PaxDb" id="170187-SP_1190"/>
<dbReference type="EnsemblBacteria" id="AAK75299">
    <property type="protein sequence ID" value="AAK75299"/>
    <property type="gene ID" value="SP_1190"/>
</dbReference>
<dbReference type="KEGG" id="spn:SP_1190"/>
<dbReference type="eggNOG" id="COG3684">
    <property type="taxonomic scope" value="Bacteria"/>
</dbReference>
<dbReference type="PhylomeDB" id="Q97QL3"/>
<dbReference type="BioCyc" id="SPNE170187:G1FZB-1207-MONOMER"/>
<dbReference type="UniPathway" id="UPA00704">
    <property type="reaction ID" value="UER00716"/>
</dbReference>
<dbReference type="Proteomes" id="UP000000585">
    <property type="component" value="Chromosome"/>
</dbReference>
<dbReference type="GO" id="GO:0061595">
    <property type="term" value="F:6-deoxy-6-sulfofructose-1-phosphate aldolase activity"/>
    <property type="evidence" value="ECO:0007669"/>
    <property type="project" value="TreeGrafter"/>
</dbReference>
<dbReference type="GO" id="GO:0009024">
    <property type="term" value="F:tagatose-6-phosphate kinase activity"/>
    <property type="evidence" value="ECO:0007669"/>
    <property type="project" value="InterPro"/>
</dbReference>
<dbReference type="GO" id="GO:0009025">
    <property type="term" value="F:tagatose-bisphosphate aldolase activity"/>
    <property type="evidence" value="ECO:0007669"/>
    <property type="project" value="UniProtKB-UniRule"/>
</dbReference>
<dbReference type="GO" id="GO:1902777">
    <property type="term" value="P:6-sulfoquinovose(1-) catabolic process"/>
    <property type="evidence" value="ECO:0007669"/>
    <property type="project" value="TreeGrafter"/>
</dbReference>
<dbReference type="GO" id="GO:2001059">
    <property type="term" value="P:D-tagatose 6-phosphate catabolic process"/>
    <property type="evidence" value="ECO:0007669"/>
    <property type="project" value="UniProtKB-UniRule"/>
</dbReference>
<dbReference type="GO" id="GO:0019512">
    <property type="term" value="P:lactose catabolic process via tagatose-6-phosphate"/>
    <property type="evidence" value="ECO:0007669"/>
    <property type="project" value="InterPro"/>
</dbReference>
<dbReference type="FunFam" id="3.20.20.70:FF:000137">
    <property type="entry name" value="Tagatose 1,6-diphosphate aldolase 2"/>
    <property type="match status" value="1"/>
</dbReference>
<dbReference type="Gene3D" id="3.20.20.70">
    <property type="entry name" value="Aldolase class I"/>
    <property type="match status" value="1"/>
</dbReference>
<dbReference type="HAMAP" id="MF_00734">
    <property type="entry name" value="LacD"/>
    <property type="match status" value="1"/>
</dbReference>
<dbReference type="InterPro" id="IPR013785">
    <property type="entry name" value="Aldolase_TIM"/>
</dbReference>
<dbReference type="InterPro" id="IPR002915">
    <property type="entry name" value="DeoC/FbaB/LacD_aldolase"/>
</dbReference>
<dbReference type="InterPro" id="IPR050552">
    <property type="entry name" value="LacD_aldolase"/>
</dbReference>
<dbReference type="InterPro" id="IPR005927">
    <property type="entry name" value="Tag_1.6-dipho_adolase"/>
</dbReference>
<dbReference type="NCBIfam" id="TIGR01232">
    <property type="entry name" value="lacD"/>
    <property type="match status" value="1"/>
</dbReference>
<dbReference type="NCBIfam" id="NF003180">
    <property type="entry name" value="PRK04161.1"/>
    <property type="match status" value="1"/>
</dbReference>
<dbReference type="NCBIfam" id="NF009065">
    <property type="entry name" value="PRK12399.1"/>
    <property type="match status" value="1"/>
</dbReference>
<dbReference type="NCBIfam" id="NF009498">
    <property type="entry name" value="PRK12858.1"/>
    <property type="match status" value="1"/>
</dbReference>
<dbReference type="PANTHER" id="PTHR39340">
    <property type="entry name" value="SULFOFRUCTOSEPHOSPHATE ALDOLASE"/>
    <property type="match status" value="1"/>
</dbReference>
<dbReference type="PANTHER" id="PTHR39340:SF1">
    <property type="entry name" value="SULFOFRUCTOSEPHOSPHATE ALDOLASE"/>
    <property type="match status" value="1"/>
</dbReference>
<dbReference type="Pfam" id="PF01791">
    <property type="entry name" value="DeoC"/>
    <property type="match status" value="1"/>
</dbReference>
<dbReference type="SMART" id="SM01133">
    <property type="entry name" value="DeoC"/>
    <property type="match status" value="1"/>
</dbReference>
<dbReference type="SUPFAM" id="SSF51569">
    <property type="entry name" value="Aldolase"/>
    <property type="match status" value="1"/>
</dbReference>
<proteinExistence type="inferred from homology"/>
<sequence length="326" mass="36372">MALTEQKRVRLEKLSDENGIISALAFDQRGALKRLMVKHQTEEPTVAQMEELKVLVADELTKYASSMLLDPEYGLPATKALDEKAGLLLAYEKTGYDTTSTKRLPDCLDVWSAKRIKEEGADAVKFLLYYDVDSSDELNQEKQAYIERIGSECVAEDIPFFLEILAYDEKIADAGSVEYAKVKPHKVIGAMKVFSDPRFNIDVLKVEVPVNIKYVEGFAEGEVVYTREEAAAFFKAQDEATNLPYIYLSAGVSAKLFQDTLVFAHESGANFNGVLCGRATWAGSVEAYIKDGEAAARECVRTTGFENIDELNKVLQRTATSWKERV</sequence>
<keyword id="KW-0423">Lactose metabolism</keyword>
<keyword id="KW-0456">Lyase</keyword>
<keyword id="KW-1185">Reference proteome</keyword>
<evidence type="ECO:0000255" key="1">
    <source>
        <dbReference type="HAMAP-Rule" id="MF_00734"/>
    </source>
</evidence>
<protein>
    <recommendedName>
        <fullName evidence="1">Tagatose 1,6-diphosphate aldolase</fullName>
        <ecNumber evidence="1">4.1.2.40</ecNumber>
    </recommendedName>
    <alternativeName>
        <fullName evidence="1">D-tagatose-1,6-bisphosphate aldolase</fullName>
    </alternativeName>
    <alternativeName>
        <fullName evidence="1">Tagatose-bisphosphate aldolase</fullName>
    </alternativeName>
</protein>
<gene>
    <name evidence="1" type="primary">lacD</name>
    <name type="ordered locus">SP_1190</name>
</gene>
<accession>Q97QL3</accession>
<name>LACD_STRPN</name>
<organism>
    <name type="scientific">Streptococcus pneumoniae serotype 4 (strain ATCC BAA-334 / TIGR4)</name>
    <dbReference type="NCBI Taxonomy" id="170187"/>
    <lineage>
        <taxon>Bacteria</taxon>
        <taxon>Bacillati</taxon>
        <taxon>Bacillota</taxon>
        <taxon>Bacilli</taxon>
        <taxon>Lactobacillales</taxon>
        <taxon>Streptococcaceae</taxon>
        <taxon>Streptococcus</taxon>
    </lineage>
</organism>
<comment type="catalytic activity">
    <reaction evidence="1">
        <text>D-tagatofuranose 1,6-bisphosphate = D-glyceraldehyde 3-phosphate + dihydroxyacetone phosphate</text>
        <dbReference type="Rhea" id="RHEA:22948"/>
        <dbReference type="ChEBI" id="CHEBI:57642"/>
        <dbReference type="ChEBI" id="CHEBI:58694"/>
        <dbReference type="ChEBI" id="CHEBI:59776"/>
        <dbReference type="EC" id="4.1.2.40"/>
    </reaction>
</comment>
<comment type="pathway">
    <text evidence="1">Carbohydrate metabolism; D-tagatose 6-phosphate degradation; D-glyceraldehyde 3-phosphate and glycerone phosphate from D-tagatose 6-phosphate: step 2/2.</text>
</comment>
<comment type="similarity">
    <text evidence="1">Belongs to the aldolase LacD family.</text>
</comment>
<reference key="1">
    <citation type="journal article" date="2001" name="Science">
        <title>Complete genome sequence of a virulent isolate of Streptococcus pneumoniae.</title>
        <authorList>
            <person name="Tettelin H."/>
            <person name="Nelson K.E."/>
            <person name="Paulsen I.T."/>
            <person name="Eisen J.A."/>
            <person name="Read T.D."/>
            <person name="Peterson S.N."/>
            <person name="Heidelberg J.F."/>
            <person name="DeBoy R.T."/>
            <person name="Haft D.H."/>
            <person name="Dodson R.J."/>
            <person name="Durkin A.S."/>
            <person name="Gwinn M.L."/>
            <person name="Kolonay J.F."/>
            <person name="Nelson W.C."/>
            <person name="Peterson J.D."/>
            <person name="Umayam L.A."/>
            <person name="White O."/>
            <person name="Salzberg S.L."/>
            <person name="Lewis M.R."/>
            <person name="Radune D."/>
            <person name="Holtzapple E.K."/>
            <person name="Khouri H.M."/>
            <person name="Wolf A.M."/>
            <person name="Utterback T.R."/>
            <person name="Hansen C.L."/>
            <person name="McDonald L.A."/>
            <person name="Feldblyum T.V."/>
            <person name="Angiuoli S.V."/>
            <person name="Dickinson T."/>
            <person name="Hickey E.K."/>
            <person name="Holt I.E."/>
            <person name="Loftus B.J."/>
            <person name="Yang F."/>
            <person name="Smith H.O."/>
            <person name="Venter J.C."/>
            <person name="Dougherty B.A."/>
            <person name="Morrison D.A."/>
            <person name="Hollingshead S.K."/>
            <person name="Fraser C.M."/>
        </authorList>
    </citation>
    <scope>NUCLEOTIDE SEQUENCE [LARGE SCALE GENOMIC DNA]</scope>
    <source>
        <strain>ATCC BAA-334 / TIGR4</strain>
    </source>
</reference>